<proteinExistence type="evidence at protein level"/>
<evidence type="ECO:0000250" key="1">
    <source>
        <dbReference type="UniProtKB" id="P58606"/>
    </source>
</evidence>
<evidence type="ECO:0000250" key="2">
    <source>
        <dbReference type="UniProtKB" id="P58608"/>
    </source>
</evidence>
<evidence type="ECO:0000255" key="3"/>
<evidence type="ECO:0000269" key="4">
    <source>
    </source>
</evidence>
<evidence type="ECO:0000303" key="5">
    <source>
    </source>
</evidence>
<evidence type="ECO:0000305" key="6"/>
<evidence type="ECO:0000305" key="7">
    <source>
    </source>
</evidence>
<accession>A0A6B9L3U7</accession>
<dbReference type="EMBL" id="MN208346">
    <property type="protein sequence ID" value="QHB21535.1"/>
    <property type="molecule type" value="mRNA"/>
</dbReference>
<dbReference type="GO" id="GO:0005576">
    <property type="term" value="C:extracellular region"/>
    <property type="evidence" value="ECO:0007669"/>
    <property type="project" value="UniProtKB-SubCell"/>
</dbReference>
<dbReference type="GO" id="GO:0005246">
    <property type="term" value="F:calcium channel regulator activity"/>
    <property type="evidence" value="ECO:0007669"/>
    <property type="project" value="UniProtKB-KW"/>
</dbReference>
<dbReference type="GO" id="GO:0090729">
    <property type="term" value="F:toxin activity"/>
    <property type="evidence" value="ECO:0007669"/>
    <property type="project" value="UniProtKB-KW"/>
</dbReference>
<name>PLK2A_PLARH</name>
<feature type="signal peptide" evidence="3">
    <location>
        <begin position="1"/>
        <end position="21"/>
    </location>
</feature>
<feature type="chain" id="PRO_5025517252" description="U-reduvitoxin-Pr2a" evidence="4">
    <location>
        <begin position="22"/>
        <end position="55"/>
    </location>
</feature>
<feature type="chain" id="PRO_0000454320" description="U-reduvitoxin-Pr2b" evidence="4">
    <location>
        <begin position="24"/>
        <end position="55"/>
    </location>
</feature>
<feature type="disulfide bond" evidence="1">
    <location>
        <begin position="26"/>
        <end position="41"/>
    </location>
</feature>
<feature type="disulfide bond" evidence="1">
    <location>
        <begin position="33"/>
        <end position="46"/>
    </location>
</feature>
<feature type="disulfide bond" evidence="1">
    <location>
        <begin position="40"/>
        <end position="51"/>
    </location>
</feature>
<reference key="1">
    <citation type="journal article" date="2019" name="Toxins">
        <title>Missiles of mass disruption: composition and glandular origin of venom used as a projectile defensive weapon by the assassin bug Platymeris rhadamanthus.</title>
        <authorList>
            <person name="Walker A.A."/>
            <person name="Robinson S.D."/>
            <person name="Undheim E.A.B."/>
            <person name="Jin J."/>
            <person name="Han X."/>
            <person name="Fry B.G."/>
            <person name="Vetter I."/>
            <person name="King G.F."/>
        </authorList>
    </citation>
    <scope>NUCLEOTIDE SEQUENCE [MRNA]</scope>
    <scope>MASS SPECTROMETRY</scope>
    <scope>SUBCELLULAR LOCATION</scope>
    <scope>TISSUE SPECIFICITY</scope>
    <source>
        <tissue>Venom</tissue>
        <tissue>Venom gland</tissue>
    </source>
</reference>
<protein>
    <recommendedName>
        <fullName evidence="5">U-reduvitoxin-Pr2a</fullName>
        <shortName evidence="5">U-RDTX-Pr2a</shortName>
    </recommendedName>
    <component>
        <recommendedName>
            <fullName evidence="5">U-reduvitoxin-Pr2b</fullName>
            <shortName evidence="5">U-RDTX-Pr2b</shortName>
        </recommendedName>
    </component>
</protein>
<keyword id="KW-0108">Calcium channel impairing toxin</keyword>
<keyword id="KW-1015">Disulfide bond</keyword>
<keyword id="KW-0872">Ion channel impairing toxin</keyword>
<keyword id="KW-0960">Knottin</keyword>
<keyword id="KW-0528">Neurotoxin</keyword>
<keyword id="KW-0964">Secreted</keyword>
<keyword id="KW-0732">Signal</keyword>
<keyword id="KW-0800">Toxin</keyword>
<keyword id="KW-1218">Voltage-gated calcium channel impairing toxin</keyword>
<organism>
    <name type="scientific">Platymeris rhadamanthus</name>
    <name type="common">Red spot assassin bug</name>
    <dbReference type="NCBI Taxonomy" id="1134088"/>
    <lineage>
        <taxon>Eukaryota</taxon>
        <taxon>Metazoa</taxon>
        <taxon>Ecdysozoa</taxon>
        <taxon>Arthropoda</taxon>
        <taxon>Hexapoda</taxon>
        <taxon>Insecta</taxon>
        <taxon>Pterygota</taxon>
        <taxon>Neoptera</taxon>
        <taxon>Paraneoptera</taxon>
        <taxon>Hemiptera</taxon>
        <taxon>Heteroptera</taxon>
        <taxon>Panheteroptera</taxon>
        <taxon>Cimicomorpha</taxon>
        <taxon>Reduviidae</taxon>
        <taxon>Platymeris</taxon>
    </lineage>
</organism>
<comment type="function">
    <text evidence="2">Binds reversibly and blocks P/Q-type voltage-gated calcium channels (Cav).</text>
</comment>
<comment type="subcellular location">
    <subcellularLocation>
        <location evidence="4">Secreted</location>
    </subcellularLocation>
</comment>
<comment type="tissue specificity">
    <text evidence="7">Expressed by the venom gland (posterior main gland) (at protein level).</text>
</comment>
<comment type="domain">
    <text evidence="6">The presence of a 'disulfide through disulfide knot' structurally defines this protein as a knottin.</text>
</comment>
<comment type="mass spectrometry" mass="3763.59" method="MALDI" evidence="4">
    <text>Monoisotopic mass.</text>
</comment>
<comment type="mass spectrometry" mass="3505.51" method="MALDI" evidence="4">
    <text>Monoisotopic mass.</text>
</comment>
<comment type="similarity">
    <text evidence="6">Belongs to the venom Ptu1-like knottin family.</text>
</comment>
<sequence length="55" mass="6175">MMKFLLVLFLITITLITMAYSEEHGCIPPFQPCEGVNSRCCGLYVCFNKICLATP</sequence>